<name>GTR2_MOUSE</name>
<evidence type="ECO:0000250" key="1">
    <source>
        <dbReference type="UniProtKB" id="P11168"/>
    </source>
</evidence>
<evidence type="ECO:0000250" key="2">
    <source>
        <dbReference type="UniProtKB" id="P11169"/>
    </source>
</evidence>
<evidence type="ECO:0000255" key="3"/>
<evidence type="ECO:0000269" key="4">
    <source>
    </source>
</evidence>
<evidence type="ECO:0000269" key="5">
    <source>
    </source>
</evidence>
<evidence type="ECO:0000269" key="6">
    <source>
    </source>
</evidence>
<evidence type="ECO:0000303" key="7">
    <source>
    </source>
</evidence>
<evidence type="ECO:0000303" key="8">
    <source>
    </source>
</evidence>
<evidence type="ECO:0000305" key="9"/>
<evidence type="ECO:0000305" key="10">
    <source>
    </source>
</evidence>
<evidence type="ECO:0000312" key="11">
    <source>
        <dbReference type="MGI" id="MGI:1095438"/>
    </source>
</evidence>
<evidence type="ECO:0007744" key="12">
    <source>
    </source>
</evidence>
<evidence type="ECO:0007744" key="13">
    <source>
    </source>
</evidence>
<keyword id="KW-1003">Cell membrane</keyword>
<keyword id="KW-0325">Glycoprotein</keyword>
<keyword id="KW-0472">Membrane</keyword>
<keyword id="KW-0597">Phosphoprotein</keyword>
<keyword id="KW-1185">Reference proteome</keyword>
<keyword id="KW-0762">Sugar transport</keyword>
<keyword id="KW-0812">Transmembrane</keyword>
<keyword id="KW-1133">Transmembrane helix</keyword>
<keyword id="KW-0813">Transport</keyword>
<sequence>MSEDKITGTLAFTVFTAVLSSFQFGYDIGVINAPQEVIISHYRHVLGVPLDDRKAAINYDVNGTDTPLTVTPAYTTPAPWDEEETEGSAHIVTMLWSLSVSSFAVGGMVASFFGGWLGDKLGRIKAMLAANSLSLTGALLMGCSKFGPAHALIIAGRSVSGLYCGLISGLVPMYIGEIAPTTLRGALGTLHQLALVTGILISQIAGLSFILGNQDHWHILLGLSAVPALLQCLLLLFCPESPRYLYIKLEEEVRAKKSLKRLRGTEDVTKDINEMKKEKEEASTEQKVSVIQLFTDANYRQPILVALMLHMAQQFSGINGIFYYSTSIFQTAGISQPVYATIGVGAINMIFTAVSVLLVEKAGRRTLFLTGMIGMFFCTIFMSVGLVLLDKFAWMSYVSMTAIFLFVSFFEIGPGPIPWFMVAEFFSQGPRPTALALAAFSNWVCNFVIALCFQYIADFLGPYVFFLFAGVVLVFTLFTFFKVPETKGKSFEEIAAEFRKKSGSAPPRKAAVQMEFLASSESV</sequence>
<dbReference type="EMBL" id="X16986">
    <property type="protein sequence ID" value="CAA34855.1"/>
    <property type="molecule type" value="mRNA"/>
</dbReference>
<dbReference type="EMBL" id="X15684">
    <property type="protein sequence ID" value="CAA33719.1"/>
    <property type="molecule type" value="mRNA"/>
</dbReference>
<dbReference type="EMBL" id="S77926">
    <property type="protein sequence ID" value="AAB20847.1"/>
    <property type="molecule type" value="mRNA"/>
</dbReference>
<dbReference type="EMBL" id="AK005068">
    <property type="protein sequence ID" value="BAB23792.1"/>
    <property type="molecule type" value="mRNA"/>
</dbReference>
<dbReference type="EMBL" id="AK165430">
    <property type="protein sequence ID" value="BAE38184.1"/>
    <property type="molecule type" value="mRNA"/>
</dbReference>
<dbReference type="EMBL" id="BC034675">
    <property type="protein sequence ID" value="AAH34675.1"/>
    <property type="molecule type" value="mRNA"/>
</dbReference>
<dbReference type="EMBL" id="X78722">
    <property type="protein sequence ID" value="CAA55368.1"/>
    <property type="molecule type" value="Genomic_DNA"/>
</dbReference>
<dbReference type="CCDS" id="CCDS50880.1"/>
<dbReference type="PIR" id="S06920">
    <property type="entry name" value="S06920"/>
</dbReference>
<dbReference type="RefSeq" id="NP_112474.2">
    <property type="nucleotide sequence ID" value="NM_031197.2"/>
</dbReference>
<dbReference type="SMR" id="P14246"/>
<dbReference type="BioGRID" id="203305">
    <property type="interactions" value="3"/>
</dbReference>
<dbReference type="FunCoup" id="P14246">
    <property type="interactions" value="309"/>
</dbReference>
<dbReference type="IntAct" id="P14246">
    <property type="interactions" value="1"/>
</dbReference>
<dbReference type="STRING" id="10090.ENSMUSP00000029240"/>
<dbReference type="GlyCosmos" id="P14246">
    <property type="glycosylation" value="1 site, No reported glycans"/>
</dbReference>
<dbReference type="GlyGen" id="P14246">
    <property type="glycosylation" value="2 sites, 1 O-linked glycan (1 site)"/>
</dbReference>
<dbReference type="iPTMnet" id="P14246"/>
<dbReference type="PhosphoSitePlus" id="P14246"/>
<dbReference type="SwissPalm" id="P14246"/>
<dbReference type="jPOST" id="P14246"/>
<dbReference type="PaxDb" id="10090-ENSMUSP00000029240"/>
<dbReference type="PeptideAtlas" id="P14246"/>
<dbReference type="ProteomicsDB" id="271186"/>
<dbReference type="Antibodypedia" id="4178">
    <property type="antibodies" value="536 antibodies from 42 providers"/>
</dbReference>
<dbReference type="DNASU" id="20526"/>
<dbReference type="Ensembl" id="ENSMUST00000029240.14">
    <property type="protein sequence ID" value="ENSMUSP00000029240.8"/>
    <property type="gene ID" value="ENSMUSG00000027690.14"/>
</dbReference>
<dbReference type="GeneID" id="20526"/>
<dbReference type="KEGG" id="mmu:20526"/>
<dbReference type="UCSC" id="uc008oua.2">
    <property type="organism name" value="mouse"/>
</dbReference>
<dbReference type="AGR" id="MGI:1095438"/>
<dbReference type="CTD" id="6514"/>
<dbReference type="MGI" id="MGI:1095438">
    <property type="gene designation" value="Slc2a2"/>
</dbReference>
<dbReference type="VEuPathDB" id="HostDB:ENSMUSG00000027690"/>
<dbReference type="eggNOG" id="KOG0569">
    <property type="taxonomic scope" value="Eukaryota"/>
</dbReference>
<dbReference type="GeneTree" id="ENSGT00940000155708"/>
<dbReference type="HOGENOM" id="CLU_001265_30_5_1"/>
<dbReference type="InParanoid" id="P14246"/>
<dbReference type="OMA" id="VMVVFAC"/>
<dbReference type="OrthoDB" id="4540492at2759"/>
<dbReference type="PhylomeDB" id="P14246"/>
<dbReference type="TreeFam" id="TF313762"/>
<dbReference type="Reactome" id="R-MMU-189200">
    <property type="pathway name" value="Cellular hexose transport"/>
</dbReference>
<dbReference type="Reactome" id="R-MMU-422356">
    <property type="pathway name" value="Regulation of insulin secretion"/>
</dbReference>
<dbReference type="Reactome" id="R-MMU-8981373">
    <property type="pathway name" value="Intestinal hexose absorption"/>
</dbReference>
<dbReference type="BioGRID-ORCS" id="20526">
    <property type="hits" value="2 hits in 76 CRISPR screens"/>
</dbReference>
<dbReference type="ChiTaRS" id="Slc2a2">
    <property type="organism name" value="mouse"/>
</dbReference>
<dbReference type="PRO" id="PR:P14246"/>
<dbReference type="Proteomes" id="UP000000589">
    <property type="component" value="Chromosome 3"/>
</dbReference>
<dbReference type="RNAct" id="P14246">
    <property type="molecule type" value="protein"/>
</dbReference>
<dbReference type="Bgee" id="ENSMUSG00000027690">
    <property type="expression patterns" value="Expressed in islet of Langerhans and 57 other cell types or tissues"/>
</dbReference>
<dbReference type="ExpressionAtlas" id="P14246">
    <property type="expression patterns" value="baseline and differential"/>
</dbReference>
<dbReference type="GO" id="GO:0016324">
    <property type="term" value="C:apical plasma membrane"/>
    <property type="evidence" value="ECO:0000314"/>
    <property type="project" value="MGI"/>
</dbReference>
<dbReference type="GO" id="GO:0005903">
    <property type="term" value="C:brush border"/>
    <property type="evidence" value="ECO:0000314"/>
    <property type="project" value="MGI"/>
</dbReference>
<dbReference type="GO" id="GO:0005911">
    <property type="term" value="C:cell-cell junction"/>
    <property type="evidence" value="ECO:0000314"/>
    <property type="project" value="MGI"/>
</dbReference>
<dbReference type="GO" id="GO:0005737">
    <property type="term" value="C:cytoplasm"/>
    <property type="evidence" value="ECO:0000314"/>
    <property type="project" value="UniProtKB"/>
</dbReference>
<dbReference type="GO" id="GO:0005886">
    <property type="term" value="C:plasma membrane"/>
    <property type="evidence" value="ECO:0000314"/>
    <property type="project" value="MGI"/>
</dbReference>
<dbReference type="GO" id="GO:0055056">
    <property type="term" value="F:D-glucose transmembrane transporter activity"/>
    <property type="evidence" value="ECO:0000314"/>
    <property type="project" value="UniProtKB"/>
</dbReference>
<dbReference type="GO" id="GO:0033300">
    <property type="term" value="F:dehydroascorbic acid transmembrane transporter activity"/>
    <property type="evidence" value="ECO:0000314"/>
    <property type="project" value="UniProtKB"/>
</dbReference>
<dbReference type="GO" id="GO:0005353">
    <property type="term" value="F:fructose transmembrane transporter activity"/>
    <property type="evidence" value="ECO:0000250"/>
    <property type="project" value="UniProtKB"/>
</dbReference>
<dbReference type="GO" id="GO:0005354">
    <property type="term" value="F:galactose transmembrane transporter activity"/>
    <property type="evidence" value="ECO:0000250"/>
    <property type="project" value="UniProtKB"/>
</dbReference>
<dbReference type="GO" id="GO:0008643">
    <property type="term" value="P:carbohydrate transport"/>
    <property type="evidence" value="ECO:0000304"/>
    <property type="project" value="MGI"/>
</dbReference>
<dbReference type="GO" id="GO:1904659">
    <property type="term" value="P:D-glucose transmembrane transport"/>
    <property type="evidence" value="ECO:0000314"/>
    <property type="project" value="UniProtKB"/>
</dbReference>
<dbReference type="GO" id="GO:0070837">
    <property type="term" value="P:dehydroascorbic acid transport"/>
    <property type="evidence" value="ECO:0000314"/>
    <property type="project" value="UniProtKB"/>
</dbReference>
<dbReference type="GO" id="GO:0015755">
    <property type="term" value="P:fructose transmembrane transport"/>
    <property type="evidence" value="ECO:0000250"/>
    <property type="project" value="UniProtKB"/>
</dbReference>
<dbReference type="GO" id="GO:0015757">
    <property type="term" value="P:galactose transmembrane transport"/>
    <property type="evidence" value="ECO:0000250"/>
    <property type="project" value="UniProtKB"/>
</dbReference>
<dbReference type="GO" id="GO:0035774">
    <property type="term" value="P:positive regulation of insulin secretion involved in cellular response to glucose stimulus"/>
    <property type="evidence" value="ECO:0000315"/>
    <property type="project" value="MGI"/>
</dbReference>
<dbReference type="CDD" id="cd17431">
    <property type="entry name" value="MFS_GLUT_Class1"/>
    <property type="match status" value="1"/>
</dbReference>
<dbReference type="FunFam" id="1.20.1250.20:FF:000029">
    <property type="entry name" value="solute carrier family 2, facilitated glucose transporter member 4"/>
    <property type="match status" value="1"/>
</dbReference>
<dbReference type="Gene3D" id="1.20.1250.20">
    <property type="entry name" value="MFS general substrate transporter like domains"/>
    <property type="match status" value="1"/>
</dbReference>
<dbReference type="InterPro" id="IPR002440">
    <property type="entry name" value="Glc_transpt_2"/>
</dbReference>
<dbReference type="InterPro" id="IPR045263">
    <property type="entry name" value="GLUT"/>
</dbReference>
<dbReference type="InterPro" id="IPR020846">
    <property type="entry name" value="MFS_dom"/>
</dbReference>
<dbReference type="InterPro" id="IPR005828">
    <property type="entry name" value="MFS_sugar_transport-like"/>
</dbReference>
<dbReference type="InterPro" id="IPR036259">
    <property type="entry name" value="MFS_trans_sf"/>
</dbReference>
<dbReference type="InterPro" id="IPR003663">
    <property type="entry name" value="Sugar/inositol_transpt"/>
</dbReference>
<dbReference type="InterPro" id="IPR005829">
    <property type="entry name" value="Sugar_transporter_CS"/>
</dbReference>
<dbReference type="NCBIfam" id="TIGR00879">
    <property type="entry name" value="SP"/>
    <property type="match status" value="1"/>
</dbReference>
<dbReference type="PANTHER" id="PTHR23503">
    <property type="entry name" value="SOLUTE CARRIER FAMILY 2"/>
    <property type="match status" value="1"/>
</dbReference>
<dbReference type="PANTHER" id="PTHR23503:SF27">
    <property type="entry name" value="SOLUTE CARRIER FAMILY 2, FACILITATED GLUCOSE TRANSPORTER MEMBER 2"/>
    <property type="match status" value="1"/>
</dbReference>
<dbReference type="Pfam" id="PF00083">
    <property type="entry name" value="Sugar_tr"/>
    <property type="match status" value="1"/>
</dbReference>
<dbReference type="PRINTS" id="PR01191">
    <property type="entry name" value="GLUCTRSPORT2"/>
</dbReference>
<dbReference type="PRINTS" id="PR00171">
    <property type="entry name" value="SUGRTRNSPORT"/>
</dbReference>
<dbReference type="SUPFAM" id="SSF103473">
    <property type="entry name" value="MFS general substrate transporter"/>
    <property type="match status" value="1"/>
</dbReference>
<dbReference type="PROSITE" id="PS50850">
    <property type="entry name" value="MFS"/>
    <property type="match status" value="1"/>
</dbReference>
<dbReference type="PROSITE" id="PS00216">
    <property type="entry name" value="SUGAR_TRANSPORT_1"/>
    <property type="match status" value="1"/>
</dbReference>
<dbReference type="PROSITE" id="PS00217">
    <property type="entry name" value="SUGAR_TRANSPORT_2"/>
    <property type="match status" value="1"/>
</dbReference>
<protein>
    <recommendedName>
        <fullName evidence="9">Solute carrier family 2, facilitated glucose transporter member 2</fullName>
    </recommendedName>
    <alternativeName>
        <fullName evidence="7">Glucose transporter type 2, liver</fullName>
        <shortName evidence="8">GLUT-2</shortName>
    </alternativeName>
</protein>
<feature type="chain" id="PRO_0000050347" description="Solute carrier family 2, facilitated glucose transporter member 2">
    <location>
        <begin position="1"/>
        <end position="523"/>
    </location>
</feature>
<feature type="topological domain" description="Cytoplasmic" evidence="3">
    <location>
        <begin position="1"/>
        <end position="10"/>
    </location>
</feature>
<feature type="transmembrane region" description="Helical; Name=1" evidence="3">
    <location>
        <begin position="11"/>
        <end position="31"/>
    </location>
</feature>
<feature type="topological domain" description="Extracellular" evidence="3">
    <location>
        <begin position="32"/>
        <end position="97"/>
    </location>
</feature>
<feature type="transmembrane region" description="Helical; Name=2" evidence="3">
    <location>
        <begin position="98"/>
        <end position="118"/>
    </location>
</feature>
<feature type="topological domain" description="Cytoplasmic" evidence="3">
    <location>
        <begin position="119"/>
        <end position="126"/>
    </location>
</feature>
<feature type="transmembrane region" description="Helical; Name=3" evidence="3">
    <location>
        <begin position="127"/>
        <end position="147"/>
    </location>
</feature>
<feature type="topological domain" description="Extracellular" evidence="3">
    <location>
        <begin position="148"/>
        <end position="157"/>
    </location>
</feature>
<feature type="transmembrane region" description="Helical; Name=4" evidence="3">
    <location>
        <begin position="158"/>
        <end position="178"/>
    </location>
</feature>
<feature type="topological domain" description="Cytoplasmic" evidence="3">
    <location>
        <begin position="179"/>
        <end position="186"/>
    </location>
</feature>
<feature type="transmembrane region" description="Helical; Name=5" evidence="3">
    <location>
        <begin position="187"/>
        <end position="207"/>
    </location>
</feature>
<feature type="topological domain" description="Extracellular" evidence="3">
    <location>
        <begin position="208"/>
        <end position="216"/>
    </location>
</feature>
<feature type="transmembrane region" description="Helical; Name=6" evidence="3">
    <location>
        <begin position="217"/>
        <end position="237"/>
    </location>
</feature>
<feature type="topological domain" description="Cytoplasmic" evidence="3">
    <location>
        <begin position="238"/>
        <end position="302"/>
    </location>
</feature>
<feature type="transmembrane region" description="Helical; Name=7" evidence="3">
    <location>
        <begin position="303"/>
        <end position="323"/>
    </location>
</feature>
<feature type="topological domain" description="Extracellular" evidence="3">
    <location>
        <begin position="324"/>
        <end position="337"/>
    </location>
</feature>
<feature type="transmembrane region" description="Helical; Name=8" evidence="3">
    <location>
        <begin position="338"/>
        <end position="358"/>
    </location>
</feature>
<feature type="topological domain" description="Cytoplasmic" evidence="3">
    <location>
        <begin position="359"/>
        <end position="367"/>
    </location>
</feature>
<feature type="transmembrane region" description="Helical; Name=9" evidence="3">
    <location>
        <begin position="368"/>
        <end position="388"/>
    </location>
</feature>
<feature type="topological domain" description="Extracellular" evidence="3">
    <location>
        <begin position="389"/>
        <end position="401"/>
    </location>
</feature>
<feature type="transmembrane region" description="Helical; Name=10" evidence="3">
    <location>
        <begin position="402"/>
        <end position="422"/>
    </location>
</feature>
<feature type="topological domain" description="Cytoplasmic" evidence="3">
    <location>
        <begin position="423"/>
        <end position="432"/>
    </location>
</feature>
<feature type="transmembrane region" description="Helical; Name=11" evidence="3">
    <location>
        <begin position="433"/>
        <end position="453"/>
    </location>
</feature>
<feature type="topological domain" description="Extracellular" evidence="3">
    <location>
        <begin position="454"/>
        <end position="460"/>
    </location>
</feature>
<feature type="transmembrane region" description="Helical; Name=12" evidence="3">
    <location>
        <begin position="461"/>
        <end position="481"/>
    </location>
</feature>
<feature type="topological domain" description="Cytoplasmic" evidence="3">
    <location>
        <begin position="482"/>
        <end position="523"/>
    </location>
</feature>
<feature type="binding site" evidence="2">
    <location>
        <position position="192"/>
    </location>
    <ligand>
        <name>D-glucose</name>
        <dbReference type="ChEBI" id="CHEBI:4167"/>
    </ligand>
</feature>
<feature type="binding site" evidence="2">
    <location>
        <begin position="313"/>
        <end position="314"/>
    </location>
    <ligand>
        <name>D-glucose</name>
        <dbReference type="ChEBI" id="CHEBI:4167"/>
    </ligand>
</feature>
<feature type="binding site" evidence="2">
    <location>
        <position position="319"/>
    </location>
    <ligand>
        <name>D-glucose</name>
        <dbReference type="ChEBI" id="CHEBI:4167"/>
    </ligand>
</feature>
<feature type="binding site" evidence="2">
    <location>
        <position position="348"/>
    </location>
    <ligand>
        <name>D-glucose</name>
        <dbReference type="ChEBI" id="CHEBI:4167"/>
    </ligand>
</feature>
<feature type="binding site" evidence="2">
    <location>
        <position position="411"/>
    </location>
    <ligand>
        <name>D-glucose</name>
        <dbReference type="ChEBI" id="CHEBI:4167"/>
    </ligand>
</feature>
<feature type="binding site" evidence="2">
    <location>
        <position position="419"/>
    </location>
    <ligand>
        <name>D-glucose</name>
        <dbReference type="ChEBI" id="CHEBI:4167"/>
    </ligand>
</feature>
<feature type="modified residue" description="Phosphoserine" evidence="12 13">
    <location>
        <position position="522"/>
    </location>
</feature>
<feature type="glycosylation site" description="N-linked (GlcNAc...) asparagine" evidence="10">
    <location>
        <position position="62"/>
    </location>
</feature>
<feature type="sequence conflict" description="In Ref. 2; CAA33719." evidence="9" ref="2">
    <original>G</original>
    <variation>D</variation>
    <location>
        <position position="106"/>
    </location>
</feature>
<feature type="sequence conflict" description="In Ref. 1; CAA34855." evidence="9" ref="1">
    <original>T</original>
    <variation>N</variation>
    <location>
        <position position="181"/>
    </location>
</feature>
<feature type="sequence conflict" description="In Ref. 2; CAA33719." evidence="9" ref="2">
    <original>S</original>
    <variation>T</variation>
    <location>
        <position position="327"/>
    </location>
</feature>
<feature type="sequence conflict" description="In Ref. 1; CAA34855." evidence="9" ref="1">
    <original>F</original>
    <variation>L</variation>
    <location>
        <position position="351"/>
    </location>
</feature>
<feature type="sequence conflict" description="In Ref. 1; CAA34855." evidence="9" ref="1">
    <original>P</original>
    <variation>S</variation>
    <location>
        <position position="432"/>
    </location>
</feature>
<gene>
    <name evidence="11" type="primary">Slc2a2</name>
    <name evidence="8" type="synonym">Glut2</name>
</gene>
<proteinExistence type="evidence at protein level"/>
<accession>P14246</accession>
<accession>Q3TNA5</accession>
<accession>Q9DBA7</accession>
<organism>
    <name type="scientific">Mus musculus</name>
    <name type="common">Mouse</name>
    <dbReference type="NCBI Taxonomy" id="10090"/>
    <lineage>
        <taxon>Eukaryota</taxon>
        <taxon>Metazoa</taxon>
        <taxon>Chordata</taxon>
        <taxon>Craniata</taxon>
        <taxon>Vertebrata</taxon>
        <taxon>Euteleostomi</taxon>
        <taxon>Mammalia</taxon>
        <taxon>Eutheria</taxon>
        <taxon>Euarchontoglires</taxon>
        <taxon>Glires</taxon>
        <taxon>Rodentia</taxon>
        <taxon>Myomorpha</taxon>
        <taxon>Muroidea</taxon>
        <taxon>Muridae</taxon>
        <taxon>Murinae</taxon>
        <taxon>Mus</taxon>
        <taxon>Mus</taxon>
    </lineage>
</organism>
<reference key="1">
    <citation type="journal article" date="1989" name="Nucleic Acids Res.">
        <title>Sequence of the mouse liver glucose transporter.</title>
        <authorList>
            <person name="Suzue K."/>
            <person name="Lodish H.F."/>
            <person name="Thorens B."/>
        </authorList>
    </citation>
    <scope>NUCLEOTIDE SEQUENCE [MRNA]</scope>
    <source>
        <strain>BALB/cJ</strain>
        <tissue>Liver</tissue>
    </source>
</reference>
<reference key="2">
    <citation type="journal article" date="1989" name="Nucleic Acids Res.">
        <title>The nucleotide sequence of cDNA for a mouse liver-type glucose transporter protein.</title>
        <authorList>
            <person name="Asano T."/>
            <person name="Shibasaki Y."/>
            <person name="Lin J.L."/>
            <person name="Akanuma Y."/>
            <person name="Takaku F."/>
            <person name="Oka Y."/>
        </authorList>
    </citation>
    <scope>NUCLEOTIDE SEQUENCE [MRNA]</scope>
    <source>
        <strain>C57BL/6J</strain>
        <tissue>Liver</tissue>
    </source>
</reference>
<reference key="3">
    <citation type="journal article" date="2005" name="Science">
        <title>The transcriptional landscape of the mammalian genome.</title>
        <authorList>
            <person name="Carninci P."/>
            <person name="Kasukawa T."/>
            <person name="Katayama S."/>
            <person name="Gough J."/>
            <person name="Frith M.C."/>
            <person name="Maeda N."/>
            <person name="Oyama R."/>
            <person name="Ravasi T."/>
            <person name="Lenhard B."/>
            <person name="Wells C."/>
            <person name="Kodzius R."/>
            <person name="Shimokawa K."/>
            <person name="Bajic V.B."/>
            <person name="Brenner S.E."/>
            <person name="Batalov S."/>
            <person name="Forrest A.R."/>
            <person name="Zavolan M."/>
            <person name="Davis M.J."/>
            <person name="Wilming L.G."/>
            <person name="Aidinis V."/>
            <person name="Allen J.E."/>
            <person name="Ambesi-Impiombato A."/>
            <person name="Apweiler R."/>
            <person name="Aturaliya R.N."/>
            <person name="Bailey T.L."/>
            <person name="Bansal M."/>
            <person name="Baxter L."/>
            <person name="Beisel K.W."/>
            <person name="Bersano T."/>
            <person name="Bono H."/>
            <person name="Chalk A.M."/>
            <person name="Chiu K.P."/>
            <person name="Choudhary V."/>
            <person name="Christoffels A."/>
            <person name="Clutterbuck D.R."/>
            <person name="Crowe M.L."/>
            <person name="Dalla E."/>
            <person name="Dalrymple B.P."/>
            <person name="de Bono B."/>
            <person name="Della Gatta G."/>
            <person name="di Bernardo D."/>
            <person name="Down T."/>
            <person name="Engstrom P."/>
            <person name="Fagiolini M."/>
            <person name="Faulkner G."/>
            <person name="Fletcher C.F."/>
            <person name="Fukushima T."/>
            <person name="Furuno M."/>
            <person name="Futaki S."/>
            <person name="Gariboldi M."/>
            <person name="Georgii-Hemming P."/>
            <person name="Gingeras T.R."/>
            <person name="Gojobori T."/>
            <person name="Green R.E."/>
            <person name="Gustincich S."/>
            <person name="Harbers M."/>
            <person name="Hayashi Y."/>
            <person name="Hensch T.K."/>
            <person name="Hirokawa N."/>
            <person name="Hill D."/>
            <person name="Huminiecki L."/>
            <person name="Iacono M."/>
            <person name="Ikeo K."/>
            <person name="Iwama A."/>
            <person name="Ishikawa T."/>
            <person name="Jakt M."/>
            <person name="Kanapin A."/>
            <person name="Katoh M."/>
            <person name="Kawasawa Y."/>
            <person name="Kelso J."/>
            <person name="Kitamura H."/>
            <person name="Kitano H."/>
            <person name="Kollias G."/>
            <person name="Krishnan S.P."/>
            <person name="Kruger A."/>
            <person name="Kummerfeld S.K."/>
            <person name="Kurochkin I.V."/>
            <person name="Lareau L.F."/>
            <person name="Lazarevic D."/>
            <person name="Lipovich L."/>
            <person name="Liu J."/>
            <person name="Liuni S."/>
            <person name="McWilliam S."/>
            <person name="Madan Babu M."/>
            <person name="Madera M."/>
            <person name="Marchionni L."/>
            <person name="Matsuda H."/>
            <person name="Matsuzawa S."/>
            <person name="Miki H."/>
            <person name="Mignone F."/>
            <person name="Miyake S."/>
            <person name="Morris K."/>
            <person name="Mottagui-Tabar S."/>
            <person name="Mulder N."/>
            <person name="Nakano N."/>
            <person name="Nakauchi H."/>
            <person name="Ng P."/>
            <person name="Nilsson R."/>
            <person name="Nishiguchi S."/>
            <person name="Nishikawa S."/>
            <person name="Nori F."/>
            <person name="Ohara O."/>
            <person name="Okazaki Y."/>
            <person name="Orlando V."/>
            <person name="Pang K.C."/>
            <person name="Pavan W.J."/>
            <person name="Pavesi G."/>
            <person name="Pesole G."/>
            <person name="Petrovsky N."/>
            <person name="Piazza S."/>
            <person name="Reed J."/>
            <person name="Reid J.F."/>
            <person name="Ring B.Z."/>
            <person name="Ringwald M."/>
            <person name="Rost B."/>
            <person name="Ruan Y."/>
            <person name="Salzberg S.L."/>
            <person name="Sandelin A."/>
            <person name="Schneider C."/>
            <person name="Schoenbach C."/>
            <person name="Sekiguchi K."/>
            <person name="Semple C.A."/>
            <person name="Seno S."/>
            <person name="Sessa L."/>
            <person name="Sheng Y."/>
            <person name="Shibata Y."/>
            <person name="Shimada H."/>
            <person name="Shimada K."/>
            <person name="Silva D."/>
            <person name="Sinclair B."/>
            <person name="Sperling S."/>
            <person name="Stupka E."/>
            <person name="Sugiura K."/>
            <person name="Sultana R."/>
            <person name="Takenaka Y."/>
            <person name="Taki K."/>
            <person name="Tammoja K."/>
            <person name="Tan S.L."/>
            <person name="Tang S."/>
            <person name="Taylor M.S."/>
            <person name="Tegner J."/>
            <person name="Teichmann S.A."/>
            <person name="Ueda H.R."/>
            <person name="van Nimwegen E."/>
            <person name="Verardo R."/>
            <person name="Wei C.L."/>
            <person name="Yagi K."/>
            <person name="Yamanishi H."/>
            <person name="Zabarovsky E."/>
            <person name="Zhu S."/>
            <person name="Zimmer A."/>
            <person name="Hide W."/>
            <person name="Bult C."/>
            <person name="Grimmond S.M."/>
            <person name="Teasdale R.D."/>
            <person name="Liu E.T."/>
            <person name="Brusic V."/>
            <person name="Quackenbush J."/>
            <person name="Wahlestedt C."/>
            <person name="Mattick J.S."/>
            <person name="Hume D.A."/>
            <person name="Kai C."/>
            <person name="Sasaki D."/>
            <person name="Tomaru Y."/>
            <person name="Fukuda S."/>
            <person name="Kanamori-Katayama M."/>
            <person name="Suzuki M."/>
            <person name="Aoki J."/>
            <person name="Arakawa T."/>
            <person name="Iida J."/>
            <person name="Imamura K."/>
            <person name="Itoh M."/>
            <person name="Kato T."/>
            <person name="Kawaji H."/>
            <person name="Kawagashira N."/>
            <person name="Kawashima T."/>
            <person name="Kojima M."/>
            <person name="Kondo S."/>
            <person name="Konno H."/>
            <person name="Nakano K."/>
            <person name="Ninomiya N."/>
            <person name="Nishio T."/>
            <person name="Okada M."/>
            <person name="Plessy C."/>
            <person name="Shibata K."/>
            <person name="Shiraki T."/>
            <person name="Suzuki S."/>
            <person name="Tagami M."/>
            <person name="Waki K."/>
            <person name="Watahiki A."/>
            <person name="Okamura-Oho Y."/>
            <person name="Suzuki H."/>
            <person name="Kawai J."/>
            <person name="Hayashizaki Y."/>
        </authorList>
    </citation>
    <scope>NUCLEOTIDE SEQUENCE [LARGE SCALE MRNA]</scope>
    <source>
        <strain>C57BL/6J</strain>
        <tissue>Kidney</tissue>
        <tissue>Liver</tissue>
    </source>
</reference>
<reference key="4">
    <citation type="journal article" date="2004" name="Genome Res.">
        <title>The status, quality, and expansion of the NIH full-length cDNA project: the Mammalian Gene Collection (MGC).</title>
        <authorList>
            <consortium name="The MGC Project Team"/>
        </authorList>
    </citation>
    <scope>NUCLEOTIDE SEQUENCE [LARGE SCALE MRNA]</scope>
    <source>
        <strain>FVB/N</strain>
        <tissue>Kidney</tissue>
    </source>
</reference>
<reference key="5">
    <citation type="journal article" date="1994" name="J. Biol. Chem.">
        <title>Characterization of the murine high Km glucose transporter GLUT2 gene and its transcriptional regulation by glucose in a differentiated insulin-secreting cell line.</title>
        <authorList>
            <person name="Waeber G."/>
            <person name="Thompson N."/>
            <person name="Haefliger J.-A."/>
            <person name="Nicod P."/>
        </authorList>
    </citation>
    <scope>NUCLEOTIDE SEQUENCE [GENOMIC DNA] OF 1-5</scope>
</reference>
<reference key="6">
    <citation type="journal article" date="1991" name="Development">
        <title>Glucose transporter gene expression in early mouse embryos.</title>
        <authorList>
            <person name="Hogan A."/>
            <person name="Heyner S."/>
            <person name="Charron M.J."/>
            <person name="Copeland N.G."/>
            <person name="Gilbert D.J."/>
            <person name="Jenkins N.A."/>
            <person name="Thorens B."/>
            <person name="Schultz G.A."/>
        </authorList>
    </citation>
    <scope>NUCLEOTIDE SEQUENCE OF 384-496</scope>
    <scope>TISSUE SPECIFICITY</scope>
</reference>
<reference key="7">
    <citation type="journal article" date="1992" name="Development">
        <title>Differential screening of a PCR-generated mouse embryo cDNA library: glucose transporters are differentially expressed in early postimplantation mouse embryos.</title>
        <authorList>
            <person name="Smith D.E."/>
            <person name="Gridley T."/>
        </authorList>
    </citation>
    <scope>TISSUE SPECIFICITY</scope>
    <source>
        <strain>C57BL/6J</strain>
    </source>
</reference>
<reference key="8">
    <citation type="journal article" date="2005" name="Cell">
        <title>Dietary and genetic control of glucose transporter 2 glycosylation promotes insulin secretion in suppressing diabetes.</title>
        <authorList>
            <person name="Ohtsubo K."/>
            <person name="Takamatsu S."/>
            <person name="Minowa M.T."/>
            <person name="Yoshida A."/>
            <person name="Takeuchi M."/>
            <person name="Marth J.D."/>
        </authorList>
    </citation>
    <scope>GLYCOSYLATION AT ASN-62</scope>
    <source>
        <strain>129/SvJ</strain>
    </source>
</reference>
<reference key="9">
    <citation type="journal article" date="2007" name="Proc. Natl. Acad. Sci. U.S.A.">
        <title>Large-scale phosphorylation analysis of mouse liver.</title>
        <authorList>
            <person name="Villen J."/>
            <person name="Beausoleil S.A."/>
            <person name="Gerber S.A."/>
            <person name="Gygi S.P."/>
        </authorList>
    </citation>
    <scope>PHOSPHORYLATION [LARGE SCALE ANALYSIS] AT SER-522</scope>
    <scope>IDENTIFICATION BY MASS SPECTROMETRY [LARGE SCALE ANALYSIS]</scope>
    <source>
        <tissue>Liver</tissue>
    </source>
</reference>
<reference key="10">
    <citation type="journal article" date="2010" name="Cell">
        <title>A tissue-specific atlas of mouse protein phosphorylation and expression.</title>
        <authorList>
            <person name="Huttlin E.L."/>
            <person name="Jedrychowski M.P."/>
            <person name="Elias J.E."/>
            <person name="Goswami T."/>
            <person name="Rad R."/>
            <person name="Beausoleil S.A."/>
            <person name="Villen J."/>
            <person name="Haas W."/>
            <person name="Sowa M.E."/>
            <person name="Gygi S.P."/>
        </authorList>
    </citation>
    <scope>PHOSPHORYLATION [LARGE SCALE ANALYSIS] AT SER-522</scope>
    <scope>IDENTIFICATION BY MASS SPECTROMETRY [LARGE SCALE ANALYSIS]</scope>
    <source>
        <tissue>Kidney</tissue>
        <tissue>Liver</tissue>
    </source>
</reference>
<comment type="function">
    <text evidence="1">Facilitative hexose transporter that mediates the transport of glucose, fructose and galactose. Likely mediates the bidirectional transfer of glucose across the plasma membrane of hepatocytes and is responsible for uptake of glucose by the beta cells; may comprise part of the glucose-sensing mechanism of the beta cell. May also participate with the Na(+)/glucose cotransporter in the transcellular transport of glucose in the small intestine and kidney. Also able to mediate the transport of dehydroascorbate.</text>
</comment>
<comment type="catalytic activity">
    <reaction evidence="1">
        <text>D-glucose(out) = D-glucose(in)</text>
        <dbReference type="Rhea" id="RHEA:60376"/>
        <dbReference type="ChEBI" id="CHEBI:4167"/>
    </reaction>
</comment>
<comment type="catalytic activity">
    <reaction evidence="1">
        <text>D-fructose(out) = D-fructose(in)</text>
        <dbReference type="Rhea" id="RHEA:60372"/>
        <dbReference type="ChEBI" id="CHEBI:37721"/>
    </reaction>
</comment>
<comment type="catalytic activity">
    <reaction evidence="1">
        <text>L-dehydroascorbate(out) = L-dehydroascorbate(in)</text>
        <dbReference type="Rhea" id="RHEA:60380"/>
        <dbReference type="ChEBI" id="CHEBI:58539"/>
    </reaction>
</comment>
<comment type="catalytic activity">
    <reaction evidence="1">
        <text>D-galactose(in) = D-galactose(out)</text>
        <dbReference type="Rhea" id="RHEA:34915"/>
        <dbReference type="ChEBI" id="CHEBI:4139"/>
    </reaction>
</comment>
<comment type="activity regulation">
    <text evidence="1">D-glucose and maltose competitively inhibit fructose transport. D-glucose, D-fructose and maltose inhibit deoxyglucose transport.</text>
</comment>
<comment type="subcellular location">
    <subcellularLocation>
        <location evidence="1">Cell membrane</location>
        <topology evidence="3">Multi-pass membrane protein</topology>
    </subcellularLocation>
</comment>
<comment type="tissue specificity">
    <text evidence="4 6">In embryo, expressed in endoderm layer of yolk sac and liver primordium.</text>
</comment>
<comment type="PTM">
    <text evidence="5">N-glycosylated; required for stability and retention at the cell surface of pancreatic beta cells.</text>
</comment>
<comment type="similarity">
    <text evidence="9">Belongs to the major facilitator superfamily. Sugar transporter (TC 2.A.1.1) family. Glucose transporter subfamily.</text>
</comment>